<sequence>MAKKILGYIKLQVKAGSATPSPPIGPALGQRGVNIMGFCKEFNARTENVEKGTPLPTVITVYQDKSFTFITKTPPATHYLKQITGLKSGAKLTGRETVGEVTRTQLREIAEKKMKDLNANDLEAAAKIIEGSAKAMGLKIVEA</sequence>
<protein>
    <recommendedName>
        <fullName evidence="1">Large ribosomal subunit protein uL11</fullName>
    </recommendedName>
    <alternativeName>
        <fullName evidence="2">50S ribosomal protein L11</fullName>
    </alternativeName>
</protein>
<gene>
    <name evidence="1" type="primary">rplK</name>
    <name type="ordered locus">CC_0641</name>
</gene>
<feature type="chain" id="PRO_0000104266" description="Large ribosomal subunit protein uL11">
    <location>
        <begin position="1"/>
        <end position="143"/>
    </location>
</feature>
<accession>Q9AAF9</accession>
<dbReference type="EMBL" id="AE005673">
    <property type="protein sequence ID" value="AAK22626.1"/>
    <property type="molecule type" value="Genomic_DNA"/>
</dbReference>
<dbReference type="PIR" id="F87328">
    <property type="entry name" value="F87328"/>
</dbReference>
<dbReference type="RefSeq" id="NP_419458.1">
    <property type="nucleotide sequence ID" value="NC_002696.2"/>
</dbReference>
<dbReference type="RefSeq" id="WP_010918527.1">
    <property type="nucleotide sequence ID" value="NC_002696.2"/>
</dbReference>
<dbReference type="SMR" id="Q9AAF9"/>
<dbReference type="STRING" id="190650.CC_0641"/>
<dbReference type="EnsemblBacteria" id="AAK22626">
    <property type="protein sequence ID" value="AAK22626"/>
    <property type="gene ID" value="CC_0641"/>
</dbReference>
<dbReference type="KEGG" id="ccr:CC_0641"/>
<dbReference type="PATRIC" id="fig|190650.5.peg.652"/>
<dbReference type="eggNOG" id="COG0080">
    <property type="taxonomic scope" value="Bacteria"/>
</dbReference>
<dbReference type="HOGENOM" id="CLU_074237_2_0_5"/>
<dbReference type="BioCyc" id="CAULO:CC0641-MONOMER"/>
<dbReference type="Proteomes" id="UP000001816">
    <property type="component" value="Chromosome"/>
</dbReference>
<dbReference type="GO" id="GO:0022625">
    <property type="term" value="C:cytosolic large ribosomal subunit"/>
    <property type="evidence" value="ECO:0007669"/>
    <property type="project" value="TreeGrafter"/>
</dbReference>
<dbReference type="GO" id="GO:0070180">
    <property type="term" value="F:large ribosomal subunit rRNA binding"/>
    <property type="evidence" value="ECO:0007669"/>
    <property type="project" value="UniProtKB-UniRule"/>
</dbReference>
<dbReference type="GO" id="GO:0003735">
    <property type="term" value="F:structural constituent of ribosome"/>
    <property type="evidence" value="ECO:0007669"/>
    <property type="project" value="InterPro"/>
</dbReference>
<dbReference type="GO" id="GO:0006412">
    <property type="term" value="P:translation"/>
    <property type="evidence" value="ECO:0007669"/>
    <property type="project" value="UniProtKB-UniRule"/>
</dbReference>
<dbReference type="CDD" id="cd00349">
    <property type="entry name" value="Ribosomal_L11"/>
    <property type="match status" value="1"/>
</dbReference>
<dbReference type="FunFam" id="3.30.1550.10:FF:000001">
    <property type="entry name" value="50S ribosomal protein L11"/>
    <property type="match status" value="1"/>
</dbReference>
<dbReference type="Gene3D" id="1.10.10.250">
    <property type="entry name" value="Ribosomal protein L11, C-terminal domain"/>
    <property type="match status" value="1"/>
</dbReference>
<dbReference type="Gene3D" id="3.30.1550.10">
    <property type="entry name" value="Ribosomal protein L11/L12, N-terminal domain"/>
    <property type="match status" value="1"/>
</dbReference>
<dbReference type="HAMAP" id="MF_00736">
    <property type="entry name" value="Ribosomal_uL11"/>
    <property type="match status" value="1"/>
</dbReference>
<dbReference type="InterPro" id="IPR000911">
    <property type="entry name" value="Ribosomal_uL11"/>
</dbReference>
<dbReference type="InterPro" id="IPR006519">
    <property type="entry name" value="Ribosomal_uL11_bac-typ"/>
</dbReference>
<dbReference type="InterPro" id="IPR020783">
    <property type="entry name" value="Ribosomal_uL11_C"/>
</dbReference>
<dbReference type="InterPro" id="IPR036769">
    <property type="entry name" value="Ribosomal_uL11_C_sf"/>
</dbReference>
<dbReference type="InterPro" id="IPR020784">
    <property type="entry name" value="Ribosomal_uL11_N"/>
</dbReference>
<dbReference type="InterPro" id="IPR036796">
    <property type="entry name" value="Ribosomal_uL11_N_sf"/>
</dbReference>
<dbReference type="NCBIfam" id="TIGR01632">
    <property type="entry name" value="L11_bact"/>
    <property type="match status" value="1"/>
</dbReference>
<dbReference type="PANTHER" id="PTHR11661">
    <property type="entry name" value="60S RIBOSOMAL PROTEIN L12"/>
    <property type="match status" value="1"/>
</dbReference>
<dbReference type="PANTHER" id="PTHR11661:SF1">
    <property type="entry name" value="LARGE RIBOSOMAL SUBUNIT PROTEIN UL11M"/>
    <property type="match status" value="1"/>
</dbReference>
<dbReference type="Pfam" id="PF00298">
    <property type="entry name" value="Ribosomal_L11"/>
    <property type="match status" value="1"/>
</dbReference>
<dbReference type="Pfam" id="PF03946">
    <property type="entry name" value="Ribosomal_L11_N"/>
    <property type="match status" value="1"/>
</dbReference>
<dbReference type="SMART" id="SM00649">
    <property type="entry name" value="RL11"/>
    <property type="match status" value="1"/>
</dbReference>
<dbReference type="SUPFAM" id="SSF54747">
    <property type="entry name" value="Ribosomal L11/L12e N-terminal domain"/>
    <property type="match status" value="1"/>
</dbReference>
<dbReference type="SUPFAM" id="SSF46906">
    <property type="entry name" value="Ribosomal protein L11, C-terminal domain"/>
    <property type="match status" value="1"/>
</dbReference>
<organism>
    <name type="scientific">Caulobacter vibrioides (strain ATCC 19089 / CIP 103742 / CB 15)</name>
    <name type="common">Caulobacter crescentus</name>
    <dbReference type="NCBI Taxonomy" id="190650"/>
    <lineage>
        <taxon>Bacteria</taxon>
        <taxon>Pseudomonadati</taxon>
        <taxon>Pseudomonadota</taxon>
        <taxon>Alphaproteobacteria</taxon>
        <taxon>Caulobacterales</taxon>
        <taxon>Caulobacteraceae</taxon>
        <taxon>Caulobacter</taxon>
    </lineage>
</organism>
<comment type="function">
    <text evidence="1">Forms part of the ribosomal stalk which helps the ribosome interact with GTP-bound translation factors.</text>
</comment>
<comment type="subunit">
    <text evidence="1">Part of the ribosomal stalk of the 50S ribosomal subunit. Interacts with L10 and the large rRNA to form the base of the stalk. L10 forms an elongated spine to which L12 dimers bind in a sequential fashion forming a multimeric L10(L12)X complex.</text>
</comment>
<comment type="PTM">
    <text evidence="1">One or more lysine residues are methylated.</text>
</comment>
<comment type="similarity">
    <text evidence="1">Belongs to the universal ribosomal protein uL11 family.</text>
</comment>
<keyword id="KW-0488">Methylation</keyword>
<keyword id="KW-1185">Reference proteome</keyword>
<keyword id="KW-0687">Ribonucleoprotein</keyword>
<keyword id="KW-0689">Ribosomal protein</keyword>
<keyword id="KW-0694">RNA-binding</keyword>
<keyword id="KW-0699">rRNA-binding</keyword>
<proteinExistence type="inferred from homology"/>
<reference key="1">
    <citation type="journal article" date="2001" name="Proc. Natl. Acad. Sci. U.S.A.">
        <title>Complete genome sequence of Caulobacter crescentus.</title>
        <authorList>
            <person name="Nierman W.C."/>
            <person name="Feldblyum T.V."/>
            <person name="Laub M.T."/>
            <person name="Paulsen I.T."/>
            <person name="Nelson K.E."/>
            <person name="Eisen J.A."/>
            <person name="Heidelberg J.F."/>
            <person name="Alley M.R.K."/>
            <person name="Ohta N."/>
            <person name="Maddock J.R."/>
            <person name="Potocka I."/>
            <person name="Nelson W.C."/>
            <person name="Newton A."/>
            <person name="Stephens C."/>
            <person name="Phadke N.D."/>
            <person name="Ely B."/>
            <person name="DeBoy R.T."/>
            <person name="Dodson R.J."/>
            <person name="Durkin A.S."/>
            <person name="Gwinn M.L."/>
            <person name="Haft D.H."/>
            <person name="Kolonay J.F."/>
            <person name="Smit J."/>
            <person name="Craven M.B."/>
            <person name="Khouri H.M."/>
            <person name="Shetty J."/>
            <person name="Berry K.J."/>
            <person name="Utterback T.R."/>
            <person name="Tran K."/>
            <person name="Wolf A.M."/>
            <person name="Vamathevan J.J."/>
            <person name="Ermolaeva M.D."/>
            <person name="White O."/>
            <person name="Salzberg S.L."/>
            <person name="Venter J.C."/>
            <person name="Shapiro L."/>
            <person name="Fraser C.M."/>
        </authorList>
    </citation>
    <scope>NUCLEOTIDE SEQUENCE [LARGE SCALE GENOMIC DNA]</scope>
    <source>
        <strain>ATCC 19089 / CIP 103742 / CB 15</strain>
    </source>
</reference>
<name>RL11_CAUVC</name>
<evidence type="ECO:0000255" key="1">
    <source>
        <dbReference type="HAMAP-Rule" id="MF_00736"/>
    </source>
</evidence>
<evidence type="ECO:0000305" key="2"/>